<keyword id="KW-0597">Phosphoprotein</keyword>
<keyword id="KW-1185">Reference proteome</keyword>
<keyword id="KW-0832">Ubl conjugation</keyword>
<keyword id="KW-0833">Ubl conjugation pathway</keyword>
<reference key="1">
    <citation type="journal article" date="2004" name="Genome Res.">
        <title>The status, quality, and expansion of the NIH full-length cDNA project: the Mammalian Gene Collection (MGC).</title>
        <authorList>
            <consortium name="The MGC Project Team"/>
        </authorList>
    </citation>
    <scope>NUCLEOTIDE SEQUENCE [LARGE SCALE MRNA]</scope>
    <source>
        <tissue>Placenta</tissue>
    </source>
</reference>
<protein>
    <recommendedName>
        <fullName>F-box only protein 46</fullName>
    </recommendedName>
</protein>
<proteinExistence type="evidence at transcript level"/>
<comment type="function">
    <text evidence="2">Substrate-recognition component of the SCF(FBXO46) protein ligase complex, which mediates the ubiquitination and degradation of target proteins. In absence of stress, the SCF(FBXO46) complex catalyzes ubiquitination and degradation of MTOR-phosphorylated FBXO31.</text>
</comment>
<comment type="pathway">
    <text evidence="2">Protein modification; protein ubiquitination.</text>
</comment>
<comment type="subunit">
    <text evidence="1">Part of a SCF (SKP1-cullin-F-box) protein ligase complex SCF(FBXO46) composed of CUL1, SKP1, RBX1 and FBXO46.</text>
</comment>
<comment type="PTM">
    <text evidence="2">Phosphorylated by ATM in response to DNA damage, promoting ubiquitination and degradation by the SCF(FBXO31) complex.</text>
</comment>
<comment type="PTM">
    <text evidence="2">ATM-phosphorylated FBXO46 is ubiquitinated and degradaded by the SCF(FBXO31) complex in response to DNA damage.</text>
</comment>
<name>FBX46_RAT</name>
<sequence length="603" mass="65239">MDRGSLLPFQLWCPRPFSKYSQNQPRPPSATLKPPVCPDTSSGTEPDHRPAHLESTPPALAAEAPTSQHAPLLSTAASGDEGRVLLDTWYVIKPGNTKEKVAFFVAHQCGGGSRASSMKVKGHWGSDSSKAKRRRRCLEPTKAPPDQGGQEGTPATEVAPTSSGDDVDLLSVAEMVALVEQRAALALQSYPRPSTPAPVVFVSAEQGGPAKGLGSERRSGGGDCSRVAEAVAHFEAQRDSPPTKGLRKEERPGPGPGEVRIAFRISNVREPQSPDGSLANGGGGRPACPYPGSPGPGTRAKDKITCDLYQLISPSRDALPSNVEFLLARADEASEGETPAPARPEDTPPAPPPPPARDCGASGFHVDVVVTGVVDACIFFGKDGTKNVKEETVCLTVSPEEPPPPGQLFFLQSRGPEGPPEPPPADTASKVPGPEDSEGTTDTSLCRLYRHVSHDFLEIRFKIQRLLEPRQYMLLLPEHVLVKIFSFLPTRALAALKCTCHHFKGIIEAFGVRATDSRWSRDPLYRDDPCKQCRKRYEKGDVSLCRWHPKPYHHDLPYGRSYWMCCRRADRETPGCRLGLHDNNWVLPCNGVGGGRAGREEGR</sequence>
<gene>
    <name type="primary">Fbxo46</name>
</gene>
<feature type="chain" id="PRO_0000239737" description="F-box only protein 46">
    <location>
        <begin position="1"/>
        <end position="603"/>
    </location>
</feature>
<feature type="domain" description="F-box" evidence="3">
    <location>
        <begin position="470"/>
        <end position="522"/>
    </location>
</feature>
<feature type="region of interest" description="Disordered" evidence="4">
    <location>
        <begin position="20"/>
        <end position="54"/>
    </location>
</feature>
<feature type="region of interest" description="Disordered" evidence="4">
    <location>
        <begin position="111"/>
        <end position="163"/>
    </location>
</feature>
<feature type="region of interest" description="Disordered" evidence="4">
    <location>
        <begin position="235"/>
        <end position="301"/>
    </location>
</feature>
<feature type="region of interest" description="Disordered" evidence="4">
    <location>
        <begin position="332"/>
        <end position="359"/>
    </location>
</feature>
<feature type="region of interest" description="Disordered" evidence="4">
    <location>
        <begin position="396"/>
        <end position="442"/>
    </location>
</feature>
<feature type="compositionally biased region" description="Pro residues" evidence="4">
    <location>
        <begin position="347"/>
        <end position="356"/>
    </location>
</feature>
<feature type="modified residue" description="Phosphoserine" evidence="2">
    <location>
        <position position="21"/>
    </location>
</feature>
<feature type="modified residue" description="Phosphoserine" evidence="2">
    <location>
        <position position="67"/>
    </location>
</feature>
<feature type="modified residue" description="Phosphothreonine" evidence="2">
    <location>
        <position position="347"/>
    </location>
</feature>
<accession>Q4KLY2</accession>
<organism>
    <name type="scientific">Rattus norvegicus</name>
    <name type="common">Rat</name>
    <dbReference type="NCBI Taxonomy" id="10116"/>
    <lineage>
        <taxon>Eukaryota</taxon>
        <taxon>Metazoa</taxon>
        <taxon>Chordata</taxon>
        <taxon>Craniata</taxon>
        <taxon>Vertebrata</taxon>
        <taxon>Euteleostomi</taxon>
        <taxon>Mammalia</taxon>
        <taxon>Eutheria</taxon>
        <taxon>Euarchontoglires</taxon>
        <taxon>Glires</taxon>
        <taxon>Rodentia</taxon>
        <taxon>Myomorpha</taxon>
        <taxon>Muroidea</taxon>
        <taxon>Muridae</taxon>
        <taxon>Murinae</taxon>
        <taxon>Rattus</taxon>
    </lineage>
</organism>
<dbReference type="EMBL" id="BC098945">
    <property type="protein sequence ID" value="AAH98945.1"/>
    <property type="molecule type" value="mRNA"/>
</dbReference>
<dbReference type="RefSeq" id="NP_001020813.1">
    <property type="nucleotide sequence ID" value="NM_001025642.1"/>
</dbReference>
<dbReference type="RefSeq" id="XP_006228461.1">
    <property type="nucleotide sequence ID" value="XM_006228399.5"/>
</dbReference>
<dbReference type="RefSeq" id="XP_006228462.1">
    <property type="nucleotide sequence ID" value="XM_006228400.5"/>
</dbReference>
<dbReference type="RefSeq" id="XP_006228463.1">
    <property type="nucleotide sequence ID" value="XM_006228401.5"/>
</dbReference>
<dbReference type="RefSeq" id="XP_008757132.1">
    <property type="nucleotide sequence ID" value="XM_008758910.2"/>
</dbReference>
<dbReference type="RefSeq" id="XP_017444383.1">
    <property type="nucleotide sequence ID" value="XM_017588894.1"/>
</dbReference>
<dbReference type="RefSeq" id="XP_038959883.1">
    <property type="nucleotide sequence ID" value="XM_039103955.2"/>
</dbReference>
<dbReference type="RefSeq" id="XP_038959892.1">
    <property type="nucleotide sequence ID" value="XM_039103964.2"/>
</dbReference>
<dbReference type="FunCoup" id="Q4KLY2">
    <property type="interactions" value="1632"/>
</dbReference>
<dbReference type="STRING" id="10116.ENSRNOP00000012082"/>
<dbReference type="GlyGen" id="Q4KLY2">
    <property type="glycosylation" value="2 sites"/>
</dbReference>
<dbReference type="PhosphoSitePlus" id="Q4KLY2"/>
<dbReference type="PaxDb" id="10116-ENSRNOP00000012082"/>
<dbReference type="Ensembl" id="ENSRNOT00000012082.5">
    <property type="protein sequence ID" value="ENSRNOP00000012082.3"/>
    <property type="gene ID" value="ENSRNOG00000008815.5"/>
</dbReference>
<dbReference type="Ensembl" id="ENSRNOT00000111723.1">
    <property type="protein sequence ID" value="ENSRNOP00000081250.1"/>
    <property type="gene ID" value="ENSRNOG00000008815.5"/>
</dbReference>
<dbReference type="Ensembl" id="ENSRNOT00000115550.1">
    <property type="protein sequence ID" value="ENSRNOP00000090659.1"/>
    <property type="gene ID" value="ENSRNOG00000008815.5"/>
</dbReference>
<dbReference type="Ensembl" id="ENSRNOT00000118710.1">
    <property type="protein sequence ID" value="ENSRNOP00000079832.1"/>
    <property type="gene ID" value="ENSRNOG00000008815.5"/>
</dbReference>
<dbReference type="Ensembl" id="ENSRNOT00000119270.1">
    <property type="protein sequence ID" value="ENSRNOP00000097011.1"/>
    <property type="gene ID" value="ENSRNOG00000008815.5"/>
</dbReference>
<dbReference type="GeneID" id="292686"/>
<dbReference type="KEGG" id="rno:292686"/>
<dbReference type="UCSC" id="RGD:1308393">
    <property type="organism name" value="rat"/>
</dbReference>
<dbReference type="AGR" id="RGD:1308393"/>
<dbReference type="CTD" id="23403"/>
<dbReference type="RGD" id="1308393">
    <property type="gene designation" value="Fbxo46"/>
</dbReference>
<dbReference type="eggNOG" id="KOG4564">
    <property type="taxonomic scope" value="Eukaryota"/>
</dbReference>
<dbReference type="GeneTree" id="ENSGT00530000064222"/>
<dbReference type="HOGENOM" id="CLU_028677_0_0_1"/>
<dbReference type="InParanoid" id="Q4KLY2"/>
<dbReference type="OMA" id="CHYFKSI"/>
<dbReference type="OrthoDB" id="10052741at2759"/>
<dbReference type="PhylomeDB" id="Q4KLY2"/>
<dbReference type="TreeFam" id="TF331673"/>
<dbReference type="UniPathway" id="UPA00143"/>
<dbReference type="PRO" id="PR:Q4KLY2"/>
<dbReference type="Proteomes" id="UP000002494">
    <property type="component" value="Chromosome 1"/>
</dbReference>
<dbReference type="Bgee" id="ENSRNOG00000008815">
    <property type="expression patterns" value="Expressed in testis and 19 other cell types or tissues"/>
</dbReference>
<dbReference type="GO" id="GO:0019005">
    <property type="term" value="C:SCF ubiquitin ligase complex"/>
    <property type="evidence" value="ECO:0000250"/>
    <property type="project" value="UniProtKB"/>
</dbReference>
<dbReference type="GO" id="GO:1990756">
    <property type="term" value="F:ubiquitin-like ligase-substrate adaptor activity"/>
    <property type="evidence" value="ECO:0000250"/>
    <property type="project" value="UniProtKB"/>
</dbReference>
<dbReference type="GO" id="GO:0031146">
    <property type="term" value="P:SCF-dependent proteasomal ubiquitin-dependent protein catabolic process"/>
    <property type="evidence" value="ECO:0000250"/>
    <property type="project" value="UniProtKB"/>
</dbReference>
<dbReference type="CDD" id="cd22177">
    <property type="entry name" value="F-box_FBXO46"/>
    <property type="match status" value="1"/>
</dbReference>
<dbReference type="Gene3D" id="1.20.1280.50">
    <property type="match status" value="1"/>
</dbReference>
<dbReference type="InterPro" id="IPR036047">
    <property type="entry name" value="F-box-like_dom_sf"/>
</dbReference>
<dbReference type="InterPro" id="IPR001810">
    <property type="entry name" value="F-box_dom"/>
</dbReference>
<dbReference type="InterPro" id="IPR039594">
    <property type="entry name" value="FBXO34/46"/>
</dbReference>
<dbReference type="PANTHER" id="PTHR16271">
    <property type="entry name" value="F-BOX ONLY PROTEIN 34/46 FAMILY MEMBER"/>
    <property type="match status" value="1"/>
</dbReference>
<dbReference type="PANTHER" id="PTHR16271:SF10">
    <property type="entry name" value="F-BOX ONLY PROTEIN 46"/>
    <property type="match status" value="1"/>
</dbReference>
<dbReference type="Pfam" id="PF12937">
    <property type="entry name" value="F-box-like"/>
    <property type="match status" value="1"/>
</dbReference>
<dbReference type="SMART" id="SM00256">
    <property type="entry name" value="FBOX"/>
    <property type="match status" value="1"/>
</dbReference>
<dbReference type="SUPFAM" id="SSF81383">
    <property type="entry name" value="F-box domain"/>
    <property type="match status" value="1"/>
</dbReference>
<dbReference type="PROSITE" id="PS50181">
    <property type="entry name" value="FBOX"/>
    <property type="match status" value="1"/>
</dbReference>
<evidence type="ECO:0000250" key="1">
    <source>
        <dbReference type="UniProtKB" id="Q5XUX0"/>
    </source>
</evidence>
<evidence type="ECO:0000250" key="2">
    <source>
        <dbReference type="UniProtKB" id="Q6PJ61"/>
    </source>
</evidence>
<evidence type="ECO:0000255" key="3">
    <source>
        <dbReference type="PROSITE-ProRule" id="PRU00080"/>
    </source>
</evidence>
<evidence type="ECO:0000256" key="4">
    <source>
        <dbReference type="SAM" id="MobiDB-lite"/>
    </source>
</evidence>